<comment type="function">
    <text evidence="1">Involved in the de novo purine biosynthesis. Catalyzes the transfer of formate to 5-phospho-ribosyl-glycinamide (GAR), producing 5-phospho-ribosyl-N-formylglycinamide (FGAR). Formate is provided by PurU via hydrolysis of 10-formyl-tetrahydrofolate.</text>
</comment>
<comment type="catalytic activity">
    <reaction evidence="1">
        <text>N(1)-(5-phospho-beta-D-ribosyl)glycinamide + formate + ATP = N(2)-formyl-N(1)-(5-phospho-beta-D-ribosyl)glycinamide + ADP + phosphate + H(+)</text>
        <dbReference type="Rhea" id="RHEA:24829"/>
        <dbReference type="ChEBI" id="CHEBI:15378"/>
        <dbReference type="ChEBI" id="CHEBI:15740"/>
        <dbReference type="ChEBI" id="CHEBI:30616"/>
        <dbReference type="ChEBI" id="CHEBI:43474"/>
        <dbReference type="ChEBI" id="CHEBI:143788"/>
        <dbReference type="ChEBI" id="CHEBI:147286"/>
        <dbReference type="ChEBI" id="CHEBI:456216"/>
        <dbReference type="EC" id="6.3.1.21"/>
    </reaction>
    <physiologicalReaction direction="left-to-right" evidence="1">
        <dbReference type="Rhea" id="RHEA:24830"/>
    </physiologicalReaction>
</comment>
<comment type="pathway">
    <text evidence="1">Purine metabolism; IMP biosynthesis via de novo pathway; N(2)-formyl-N(1)-(5-phospho-D-ribosyl)glycinamide from N(1)-(5-phospho-D-ribosyl)glycinamide (formate route): step 1/1.</text>
</comment>
<comment type="subunit">
    <text evidence="1">Homodimer.</text>
</comment>
<comment type="similarity">
    <text evidence="1">Belongs to the PurK/PurT family.</text>
</comment>
<dbReference type="EC" id="6.3.1.21" evidence="1"/>
<dbReference type="EMBL" id="CP000570">
    <property type="protein sequence ID" value="ABN82287.1"/>
    <property type="molecule type" value="Genomic_DNA"/>
</dbReference>
<dbReference type="RefSeq" id="WP_011851291.1">
    <property type="nucleotide sequence ID" value="NC_009074.1"/>
</dbReference>
<dbReference type="SMR" id="A3N7B6"/>
<dbReference type="KEGG" id="bpd:BURPS668_1188"/>
<dbReference type="HOGENOM" id="CLU_011534_1_3_4"/>
<dbReference type="UniPathway" id="UPA00074">
    <property type="reaction ID" value="UER00127"/>
</dbReference>
<dbReference type="GO" id="GO:0005829">
    <property type="term" value="C:cytosol"/>
    <property type="evidence" value="ECO:0007669"/>
    <property type="project" value="TreeGrafter"/>
</dbReference>
<dbReference type="GO" id="GO:0005524">
    <property type="term" value="F:ATP binding"/>
    <property type="evidence" value="ECO:0007669"/>
    <property type="project" value="UniProtKB-UniRule"/>
</dbReference>
<dbReference type="GO" id="GO:0000287">
    <property type="term" value="F:magnesium ion binding"/>
    <property type="evidence" value="ECO:0007669"/>
    <property type="project" value="InterPro"/>
</dbReference>
<dbReference type="GO" id="GO:0043815">
    <property type="term" value="F:phosphoribosylglycinamide formyltransferase 2 activity"/>
    <property type="evidence" value="ECO:0007669"/>
    <property type="project" value="UniProtKB-UniRule"/>
</dbReference>
<dbReference type="GO" id="GO:0004644">
    <property type="term" value="F:phosphoribosylglycinamide formyltransferase activity"/>
    <property type="evidence" value="ECO:0007669"/>
    <property type="project" value="InterPro"/>
</dbReference>
<dbReference type="GO" id="GO:0006189">
    <property type="term" value="P:'de novo' IMP biosynthetic process"/>
    <property type="evidence" value="ECO:0007669"/>
    <property type="project" value="UniProtKB-UniRule"/>
</dbReference>
<dbReference type="FunFam" id="3.30.1490.20:FF:000013">
    <property type="entry name" value="Formate-dependent phosphoribosylglycinamide formyltransferase"/>
    <property type="match status" value="1"/>
</dbReference>
<dbReference type="FunFam" id="3.40.50.20:FF:000007">
    <property type="entry name" value="Formate-dependent phosphoribosylglycinamide formyltransferase"/>
    <property type="match status" value="1"/>
</dbReference>
<dbReference type="Gene3D" id="3.40.50.20">
    <property type="match status" value="1"/>
</dbReference>
<dbReference type="Gene3D" id="3.30.1490.20">
    <property type="entry name" value="ATP-grasp fold, A domain"/>
    <property type="match status" value="1"/>
</dbReference>
<dbReference type="Gene3D" id="3.30.470.20">
    <property type="entry name" value="ATP-grasp fold, B domain"/>
    <property type="match status" value="1"/>
</dbReference>
<dbReference type="HAMAP" id="MF_01643">
    <property type="entry name" value="PurT"/>
    <property type="match status" value="1"/>
</dbReference>
<dbReference type="InterPro" id="IPR011761">
    <property type="entry name" value="ATP-grasp"/>
</dbReference>
<dbReference type="InterPro" id="IPR003135">
    <property type="entry name" value="ATP-grasp_carboxylate-amine"/>
</dbReference>
<dbReference type="InterPro" id="IPR013815">
    <property type="entry name" value="ATP_grasp_subdomain_1"/>
</dbReference>
<dbReference type="InterPro" id="IPR016185">
    <property type="entry name" value="PreATP-grasp_dom_sf"/>
</dbReference>
<dbReference type="InterPro" id="IPR005862">
    <property type="entry name" value="PurT"/>
</dbReference>
<dbReference type="InterPro" id="IPR054350">
    <property type="entry name" value="PurT/PurK_preATP-grasp"/>
</dbReference>
<dbReference type="InterPro" id="IPR048740">
    <property type="entry name" value="PurT_C"/>
</dbReference>
<dbReference type="InterPro" id="IPR011054">
    <property type="entry name" value="Rudment_hybrid_motif"/>
</dbReference>
<dbReference type="NCBIfam" id="NF006766">
    <property type="entry name" value="PRK09288.1"/>
    <property type="match status" value="1"/>
</dbReference>
<dbReference type="NCBIfam" id="TIGR01142">
    <property type="entry name" value="purT"/>
    <property type="match status" value="1"/>
</dbReference>
<dbReference type="PANTHER" id="PTHR43055">
    <property type="entry name" value="FORMATE-DEPENDENT PHOSPHORIBOSYLGLYCINAMIDE FORMYLTRANSFERASE"/>
    <property type="match status" value="1"/>
</dbReference>
<dbReference type="PANTHER" id="PTHR43055:SF1">
    <property type="entry name" value="FORMATE-DEPENDENT PHOSPHORIBOSYLGLYCINAMIDE FORMYLTRANSFERASE"/>
    <property type="match status" value="1"/>
</dbReference>
<dbReference type="Pfam" id="PF02222">
    <property type="entry name" value="ATP-grasp"/>
    <property type="match status" value="1"/>
</dbReference>
<dbReference type="Pfam" id="PF21244">
    <property type="entry name" value="PurT_C"/>
    <property type="match status" value="1"/>
</dbReference>
<dbReference type="Pfam" id="PF22660">
    <property type="entry name" value="RS_preATP-grasp-like"/>
    <property type="match status" value="1"/>
</dbReference>
<dbReference type="SUPFAM" id="SSF56059">
    <property type="entry name" value="Glutathione synthetase ATP-binding domain-like"/>
    <property type="match status" value="1"/>
</dbReference>
<dbReference type="SUPFAM" id="SSF52440">
    <property type="entry name" value="PreATP-grasp domain"/>
    <property type="match status" value="1"/>
</dbReference>
<dbReference type="SUPFAM" id="SSF51246">
    <property type="entry name" value="Rudiment single hybrid motif"/>
    <property type="match status" value="1"/>
</dbReference>
<dbReference type="PROSITE" id="PS50975">
    <property type="entry name" value="ATP_GRASP"/>
    <property type="match status" value="1"/>
</dbReference>
<keyword id="KW-0067">ATP-binding</keyword>
<keyword id="KW-0436">Ligase</keyword>
<keyword id="KW-0460">Magnesium</keyword>
<keyword id="KW-0479">Metal-binding</keyword>
<keyword id="KW-0547">Nucleotide-binding</keyword>
<keyword id="KW-0658">Purine biosynthesis</keyword>
<name>PURT_BURP6</name>
<organism>
    <name type="scientific">Burkholderia pseudomallei (strain 668)</name>
    <dbReference type="NCBI Taxonomy" id="320373"/>
    <lineage>
        <taxon>Bacteria</taxon>
        <taxon>Pseudomonadati</taxon>
        <taxon>Pseudomonadota</taxon>
        <taxon>Betaproteobacteria</taxon>
        <taxon>Burkholderiales</taxon>
        <taxon>Burkholderiaceae</taxon>
        <taxon>Burkholderia</taxon>
        <taxon>pseudomallei group</taxon>
    </lineage>
</organism>
<proteinExistence type="inferred from homology"/>
<feature type="chain" id="PRO_0000319144" description="Formate-dependent phosphoribosylglycinamide formyltransferase">
    <location>
        <begin position="1"/>
        <end position="404"/>
    </location>
</feature>
<feature type="domain" description="ATP-grasp" evidence="1">
    <location>
        <begin position="123"/>
        <end position="318"/>
    </location>
</feature>
<feature type="binding site" evidence="1">
    <location>
        <begin position="25"/>
        <end position="26"/>
    </location>
    <ligand>
        <name>N(1)-(5-phospho-beta-D-ribosyl)glycinamide</name>
        <dbReference type="ChEBI" id="CHEBI:143788"/>
    </ligand>
</feature>
<feature type="binding site" evidence="1">
    <location>
        <position position="85"/>
    </location>
    <ligand>
        <name>N(1)-(5-phospho-beta-D-ribosyl)glycinamide</name>
        <dbReference type="ChEBI" id="CHEBI:143788"/>
    </ligand>
</feature>
<feature type="binding site" evidence="1">
    <location>
        <position position="118"/>
    </location>
    <ligand>
        <name>ATP</name>
        <dbReference type="ChEBI" id="CHEBI:30616"/>
    </ligand>
</feature>
<feature type="binding site" evidence="1">
    <location>
        <position position="159"/>
    </location>
    <ligand>
        <name>ATP</name>
        <dbReference type="ChEBI" id="CHEBI:30616"/>
    </ligand>
</feature>
<feature type="binding site" evidence="1">
    <location>
        <begin position="164"/>
        <end position="169"/>
    </location>
    <ligand>
        <name>ATP</name>
        <dbReference type="ChEBI" id="CHEBI:30616"/>
    </ligand>
</feature>
<feature type="binding site" evidence="1">
    <location>
        <begin position="199"/>
        <end position="202"/>
    </location>
    <ligand>
        <name>ATP</name>
        <dbReference type="ChEBI" id="CHEBI:30616"/>
    </ligand>
</feature>
<feature type="binding site" evidence="1">
    <location>
        <position position="207"/>
    </location>
    <ligand>
        <name>ATP</name>
        <dbReference type="ChEBI" id="CHEBI:30616"/>
    </ligand>
</feature>
<feature type="binding site" evidence="1">
    <location>
        <position position="277"/>
    </location>
    <ligand>
        <name>Mg(2+)</name>
        <dbReference type="ChEBI" id="CHEBI:18420"/>
    </ligand>
</feature>
<feature type="binding site" evidence="1">
    <location>
        <position position="289"/>
    </location>
    <ligand>
        <name>Mg(2+)</name>
        <dbReference type="ChEBI" id="CHEBI:18420"/>
    </ligand>
</feature>
<feature type="binding site" evidence="1">
    <location>
        <position position="296"/>
    </location>
    <ligand>
        <name>N(1)-(5-phospho-beta-D-ribosyl)glycinamide</name>
        <dbReference type="ChEBI" id="CHEBI:143788"/>
    </ligand>
</feature>
<feature type="binding site" evidence="1">
    <location>
        <position position="365"/>
    </location>
    <ligand>
        <name>N(1)-(5-phospho-beta-D-ribosyl)glycinamide</name>
        <dbReference type="ChEBI" id="CHEBI:143788"/>
    </ligand>
</feature>
<feature type="binding site" evidence="1">
    <location>
        <begin position="372"/>
        <end position="373"/>
    </location>
    <ligand>
        <name>N(1)-(5-phospho-beta-D-ribosyl)glycinamide</name>
        <dbReference type="ChEBI" id="CHEBI:143788"/>
    </ligand>
</feature>
<gene>
    <name evidence="1" type="primary">purT</name>
    <name type="ordered locus">BURPS668_1188</name>
</gene>
<sequence length="404" mass="43067">MQIGQRLGTPLSPSATRVMLLGAGELGKEVIIALQRLGVEVIAVDRYPNAPGHQVAHRAHVIDMTDPDALRALVDAERPHLVVPEIEAIATDALAAIEAAGVCEVIPTARATQLTMNREGIRRLAAEELGLPTSPYAFAQSFDEFAAAVARIGFPCVVKPVMSSSGKGQSVVRSEADIEPAWRYAMAGGRVNHGRVIVEGFIRFDYEITQLTVRAIDPASGQTRTSFCAPIGHLQVAGDYVESWQPQPMSAKALERARDIAHRVTSALGGRGIFGVELFVRGDDVWFSEVSPRPHDTGLVTLASQRQSEFELHARAILGLPVEPALATPAASAVIYGGLDEAGIAFEGVRDALAVPGADLRLFGKPESFAKRRMGVALATGANVDEARERAKRAAAAVRPVSAR</sequence>
<reference key="1">
    <citation type="journal article" date="2010" name="Genome Biol. Evol.">
        <title>Continuing evolution of Burkholderia mallei through genome reduction and large-scale rearrangements.</title>
        <authorList>
            <person name="Losada L."/>
            <person name="Ronning C.M."/>
            <person name="DeShazer D."/>
            <person name="Woods D."/>
            <person name="Fedorova N."/>
            <person name="Kim H.S."/>
            <person name="Shabalina S.A."/>
            <person name="Pearson T.R."/>
            <person name="Brinkac L."/>
            <person name="Tan P."/>
            <person name="Nandi T."/>
            <person name="Crabtree J."/>
            <person name="Badger J."/>
            <person name="Beckstrom-Sternberg S."/>
            <person name="Saqib M."/>
            <person name="Schutzer S.E."/>
            <person name="Keim P."/>
            <person name="Nierman W.C."/>
        </authorList>
    </citation>
    <scope>NUCLEOTIDE SEQUENCE [LARGE SCALE GENOMIC DNA]</scope>
    <source>
        <strain>668</strain>
    </source>
</reference>
<evidence type="ECO:0000255" key="1">
    <source>
        <dbReference type="HAMAP-Rule" id="MF_01643"/>
    </source>
</evidence>
<accession>A3N7B6</accession>
<protein>
    <recommendedName>
        <fullName evidence="1">Formate-dependent phosphoribosylglycinamide formyltransferase</fullName>
        <ecNumber evidence="1">6.3.1.21</ecNumber>
    </recommendedName>
    <alternativeName>
        <fullName evidence="1">5'-phosphoribosylglycinamide transformylase 2</fullName>
    </alternativeName>
    <alternativeName>
        <fullName evidence="1">Formate-dependent GAR transformylase</fullName>
    </alternativeName>
    <alternativeName>
        <fullName evidence="1">GAR transformylase 2</fullName>
        <shortName evidence="1">GART 2</shortName>
    </alternativeName>
    <alternativeName>
        <fullName evidence="1">Non-folate glycinamide ribonucleotide transformylase</fullName>
    </alternativeName>
    <alternativeName>
        <fullName evidence="1">Phosphoribosylglycinamide formyltransferase 2</fullName>
    </alternativeName>
</protein>